<feature type="chain" id="PRO_0000145386" description="DNA topoisomerase 2">
    <location>
        <begin position="1"/>
        <end position="1485"/>
    </location>
</feature>
<feature type="domain" description="Toprim" evidence="3">
    <location>
        <begin position="499"/>
        <end position="613"/>
    </location>
</feature>
<feature type="domain" description="Topo IIA-type catalytic" evidence="4">
    <location>
        <begin position="745"/>
        <end position="1195"/>
    </location>
</feature>
<feature type="region of interest" description="Disordered" evidence="5">
    <location>
        <begin position="1"/>
        <end position="76"/>
    </location>
</feature>
<feature type="region of interest" description="Interaction with DNA" evidence="2">
    <location>
        <begin position="388"/>
        <end position="392"/>
    </location>
</feature>
<feature type="region of interest" description="Interaction with DNA" evidence="2">
    <location>
        <begin position="1019"/>
        <end position="1028"/>
    </location>
</feature>
<feature type="region of interest" description="Disordered" evidence="5">
    <location>
        <begin position="1216"/>
        <end position="1485"/>
    </location>
</feature>
<feature type="compositionally biased region" description="Acidic residues" evidence="5">
    <location>
        <begin position="1"/>
        <end position="16"/>
    </location>
</feature>
<feature type="compositionally biased region" description="Polar residues" evidence="5">
    <location>
        <begin position="46"/>
        <end position="59"/>
    </location>
</feature>
<feature type="compositionally biased region" description="Low complexity" evidence="5">
    <location>
        <begin position="64"/>
        <end position="76"/>
    </location>
</feature>
<feature type="compositionally biased region" description="Basic and acidic residues" evidence="5">
    <location>
        <begin position="1216"/>
        <end position="1225"/>
    </location>
</feature>
<feature type="compositionally biased region" description="Basic residues" evidence="5">
    <location>
        <begin position="1226"/>
        <end position="1242"/>
    </location>
</feature>
<feature type="compositionally biased region" description="Polar residues" evidence="5">
    <location>
        <begin position="1260"/>
        <end position="1273"/>
    </location>
</feature>
<feature type="compositionally biased region" description="Basic and acidic residues" evidence="5">
    <location>
        <begin position="1278"/>
        <end position="1307"/>
    </location>
</feature>
<feature type="compositionally biased region" description="Basic residues" evidence="5">
    <location>
        <begin position="1387"/>
        <end position="1396"/>
    </location>
</feature>
<feature type="compositionally biased region" description="Polar residues" evidence="5">
    <location>
        <begin position="1413"/>
        <end position="1425"/>
    </location>
</feature>
<feature type="compositionally biased region" description="Acidic residues" evidence="5">
    <location>
        <begin position="1473"/>
        <end position="1485"/>
    </location>
</feature>
<feature type="active site" description="O-(5'-phospho-DNA)-tyrosine intermediate" evidence="4">
    <location>
        <position position="835"/>
    </location>
</feature>
<feature type="binding site" evidence="2">
    <location>
        <position position="136"/>
    </location>
    <ligand>
        <name>ATP</name>
        <dbReference type="ChEBI" id="CHEBI:30616"/>
    </ligand>
</feature>
<feature type="binding site" evidence="2">
    <location>
        <position position="165"/>
    </location>
    <ligand>
        <name>ATP</name>
        <dbReference type="ChEBI" id="CHEBI:30616"/>
    </ligand>
</feature>
<feature type="binding site" evidence="2">
    <location>
        <begin position="193"/>
        <end position="195"/>
    </location>
    <ligand>
        <name>ATP</name>
        <dbReference type="ChEBI" id="CHEBI:30616"/>
    </ligand>
</feature>
<feature type="binding site" evidence="2">
    <location>
        <begin position="206"/>
        <end position="213"/>
    </location>
    <ligand>
        <name>ATP</name>
        <dbReference type="ChEBI" id="CHEBI:30616"/>
    </ligand>
</feature>
<feature type="binding site" evidence="2">
    <location>
        <begin position="421"/>
        <end position="423"/>
    </location>
    <ligand>
        <name>ATP</name>
        <dbReference type="ChEBI" id="CHEBI:30616"/>
    </ligand>
</feature>
<feature type="binding site" evidence="3">
    <location>
        <position position="505"/>
    </location>
    <ligand>
        <name>Mg(2+)</name>
        <dbReference type="ChEBI" id="CHEBI:18420"/>
        <label>1</label>
        <note>catalytic</note>
    </ligand>
</feature>
<feature type="binding site" evidence="3">
    <location>
        <position position="582"/>
    </location>
    <ligand>
        <name>Mg(2+)</name>
        <dbReference type="ChEBI" id="CHEBI:18420"/>
        <label>1</label>
        <note>catalytic</note>
    </ligand>
</feature>
<feature type="binding site" evidence="3">
    <location>
        <position position="582"/>
    </location>
    <ligand>
        <name>Mg(2+)</name>
        <dbReference type="ChEBI" id="CHEBI:18420"/>
        <label>2</label>
    </ligand>
</feature>
<feature type="binding site" evidence="3">
    <location>
        <position position="584"/>
    </location>
    <ligand>
        <name>Mg(2+)</name>
        <dbReference type="ChEBI" id="CHEBI:18420"/>
        <label>2</label>
    </ligand>
</feature>
<feature type="site" description="Interaction with DNA" evidence="3">
    <location>
        <position position="533"/>
    </location>
</feature>
<feature type="site" description="Interaction with DNA" evidence="3">
    <location>
        <position position="536"/>
    </location>
</feature>
<feature type="site" description="Interaction with DNA" evidence="3">
    <location>
        <position position="703"/>
    </location>
</feature>
<feature type="site" description="Interaction with DNA" evidence="3">
    <location>
        <position position="704"/>
    </location>
</feature>
<feature type="site" description="Interaction with DNA" evidence="3">
    <location>
        <position position="753"/>
    </location>
</feature>
<feature type="site" description="Interaction with DNA" evidence="3">
    <location>
        <position position="787"/>
    </location>
</feature>
<feature type="site" description="Interaction with DNA" evidence="3">
    <location>
        <position position="793"/>
    </location>
</feature>
<feature type="site" description="Transition state stabilizer" evidence="1">
    <location>
        <position position="834"/>
    </location>
</feature>
<feature type="site" description="Important for DNA bending; intercalates between base pairs of target DNA" evidence="1">
    <location>
        <position position="886"/>
    </location>
</feature>
<feature type="site" description="Interaction with DNA" evidence="3">
    <location>
        <position position="961"/>
    </location>
</feature>
<feature type="modified residue" description="Phosphoserine" evidence="7">
    <location>
        <position position="1310"/>
    </location>
</feature>
<feature type="modified residue" description="Phosphoserine" evidence="7">
    <location>
        <position position="1345"/>
    </location>
</feature>
<feature type="modified residue" description="Phosphoserine" evidence="7">
    <location>
        <position position="1433"/>
    </location>
</feature>
<feature type="sequence conflict" description="In Ref. 1; CAA27857." evidence="8" ref="1">
    <original>N</original>
    <variation>I</variation>
    <location>
        <position position="994"/>
    </location>
</feature>
<proteinExistence type="evidence at protein level"/>
<sequence length="1485" mass="167892">MSIDADFSDYEDEASGDENVLPNTTTKRKASTTSSKSRAKKASTPDLRQTSLTSMTASEQIPLVTNNGNGNSNVSTQYQRLTPREHVLRRPDTYIGSIEPTTSEMWVFDSEKNKLDYKAVTYVPGLYKIFDEIIVNAADNKVRDPNMNTLKVTLDPEANVISIYNNGKGIPIEIHDKEKIYIPELIFGNLLTSSNYDDNQKKVTGGRNGYGAKLCNIFSTEFVVETADKERMKKYKQTWYDNMSRKSEPVITSLKKPDEYTKITFKPDLAKFGMDKIDDDMVSIIKRRIYDMAGTVRETKVYLNNERISISGFKKYVEMYLASDTKPDEEPPRVIYEHVNDRWDVAFAVSDGQFKQVSFVNNISTIRGGTHVNYVANKIVDAIDEVVKKENKKAPVKAFQIKNYVQVFVNCQIENPSFDSQTKETLTTKVSAFGSQCTLSDKFLKAIKKSSVVEEVLKFATAKADQQLSKGDGGLRSRITGLTKLEDANKAGTKESHKCVLILTEGDSAKSLAVSGLSVVGRDYYGVFPLRGKLLNVREASHSQILNNKEIQAIKKIMGFTHKKTYTDVKGLRYGHLMIMTDQDHDGSHIKGLIINYLESSYPSLLQIPGFLIQFITPIIKCTRGNQVQAFYTLPEYEYWKEANNNGRGWKIKYYKGLGTSDHDDMKSYFSDLDRHMKYFHAMQEKDAELIEMAFAKKKADVRKEWLRTYRPGIYMDYTQPQIPIDDFINRELIQFSMADNIRSIPSVVDGLKPGQRKVVYYCFKRNLVHETKVSRLAGYVASETAYHHGEVSMEQTIVNLAQNFVGSNNINLLMPNGQFGTRSEGGKNASASRYLNTALSPLARVLFNSNDDQLLNYQNDEGQWIEPEYYVPILPMVLVNGAEGIGTGWSTFIPNYNPKDITANLRHMLNGEPLEIMTPWYRGFRGSITKVAPDRYKISGIINQIGENKVEITELPIRFWTQDMKEYLEAGLVGTEKIRKFIVDYESHHGEGNVHFNVTLTEAGMKEALNESLEVKFKLSRTQATSNMIAFDASGRIKKYDSVEDILTEFYEVRLRTYQRRKEHMVNELEKRFDRFSNQARFIHMIIEGELVVSKKKKKDLIVELKEKKFQPISKPKKGHLVDLEVENALAEEEQSGDVSQDEDSDAYNYLLSMPLWSLTYERYVELLKKKDEVMAELDALIKKTPKELWLHDLDAFEHAWNKVMDDIQREMLEEEQSSRDFVNRTKKKPRGKSTGTRKPRAIAGSSSSTAVKKEASSESKPSTTNRKQQTLLEFAASKEPEKSSDINIVKTEDNSHGLSVEENRISKSPGLDSSDSGKSRKRSQSVDSEDAGSKKPVKKIAASASGRGRKTNKPVATTIFSSDDEDDLLPSSLKPSTITSTKASAKNKGKKASSVKKQSPEDDDDDFIIPGSSSTPKASSTNAEPPEDSDSPIRKRPTRRAAATVKTPIYVDPSFDSMDEPSMQDDSFIVDNDEDVDDYDESD</sequence>
<organism>
    <name type="scientific">Schizosaccharomyces pombe (strain 972 / ATCC 24843)</name>
    <name type="common">Fission yeast</name>
    <dbReference type="NCBI Taxonomy" id="284812"/>
    <lineage>
        <taxon>Eukaryota</taxon>
        <taxon>Fungi</taxon>
        <taxon>Dikarya</taxon>
        <taxon>Ascomycota</taxon>
        <taxon>Taphrinomycotina</taxon>
        <taxon>Schizosaccharomycetes</taxon>
        <taxon>Schizosaccharomycetales</taxon>
        <taxon>Schizosaccharomycetaceae</taxon>
        <taxon>Schizosaccharomyces</taxon>
    </lineage>
</organism>
<name>TOP2_SCHPO</name>
<reference key="1">
    <citation type="journal article" date="1986" name="EMBO J.">
        <title>The nucleotide sequence of the fission yeast DNA topoisomerase II gene: structural and functional relationships to other DNA topoisomerases.</title>
        <authorList>
            <person name="Uemura T."/>
            <person name="Morikawa K."/>
            <person name="Yanagida M."/>
        </authorList>
    </citation>
    <scope>NUCLEOTIDE SEQUENCE [GENOMIC DNA]</scope>
</reference>
<reference key="2">
    <citation type="journal article" date="2002" name="Nature">
        <title>The genome sequence of Schizosaccharomyces pombe.</title>
        <authorList>
            <person name="Wood V."/>
            <person name="Gwilliam R."/>
            <person name="Rajandream M.A."/>
            <person name="Lyne M.H."/>
            <person name="Lyne R."/>
            <person name="Stewart A."/>
            <person name="Sgouros J.G."/>
            <person name="Peat N."/>
            <person name="Hayles J."/>
            <person name="Baker S.G."/>
            <person name="Basham D."/>
            <person name="Bowman S."/>
            <person name="Brooks K."/>
            <person name="Brown D."/>
            <person name="Brown S."/>
            <person name="Chillingworth T."/>
            <person name="Churcher C.M."/>
            <person name="Collins M."/>
            <person name="Connor R."/>
            <person name="Cronin A."/>
            <person name="Davis P."/>
            <person name="Feltwell T."/>
            <person name="Fraser A."/>
            <person name="Gentles S."/>
            <person name="Goble A."/>
            <person name="Hamlin N."/>
            <person name="Harris D.E."/>
            <person name="Hidalgo J."/>
            <person name="Hodgson G."/>
            <person name="Holroyd S."/>
            <person name="Hornsby T."/>
            <person name="Howarth S."/>
            <person name="Huckle E.J."/>
            <person name="Hunt S."/>
            <person name="Jagels K."/>
            <person name="James K.D."/>
            <person name="Jones L."/>
            <person name="Jones M."/>
            <person name="Leather S."/>
            <person name="McDonald S."/>
            <person name="McLean J."/>
            <person name="Mooney P."/>
            <person name="Moule S."/>
            <person name="Mungall K.L."/>
            <person name="Murphy L.D."/>
            <person name="Niblett D."/>
            <person name="Odell C."/>
            <person name="Oliver K."/>
            <person name="O'Neil S."/>
            <person name="Pearson D."/>
            <person name="Quail M.A."/>
            <person name="Rabbinowitsch E."/>
            <person name="Rutherford K.M."/>
            <person name="Rutter S."/>
            <person name="Saunders D."/>
            <person name="Seeger K."/>
            <person name="Sharp S."/>
            <person name="Skelton J."/>
            <person name="Simmonds M.N."/>
            <person name="Squares R."/>
            <person name="Squares S."/>
            <person name="Stevens K."/>
            <person name="Taylor K."/>
            <person name="Taylor R.G."/>
            <person name="Tivey A."/>
            <person name="Walsh S.V."/>
            <person name="Warren T."/>
            <person name="Whitehead S."/>
            <person name="Woodward J.R."/>
            <person name="Volckaert G."/>
            <person name="Aert R."/>
            <person name="Robben J."/>
            <person name="Grymonprez B."/>
            <person name="Weltjens I."/>
            <person name="Vanstreels E."/>
            <person name="Rieger M."/>
            <person name="Schaefer M."/>
            <person name="Mueller-Auer S."/>
            <person name="Gabel C."/>
            <person name="Fuchs M."/>
            <person name="Duesterhoeft A."/>
            <person name="Fritzc C."/>
            <person name="Holzer E."/>
            <person name="Moestl D."/>
            <person name="Hilbert H."/>
            <person name="Borzym K."/>
            <person name="Langer I."/>
            <person name="Beck A."/>
            <person name="Lehrach H."/>
            <person name="Reinhardt R."/>
            <person name="Pohl T.M."/>
            <person name="Eger P."/>
            <person name="Zimmermann W."/>
            <person name="Wedler H."/>
            <person name="Wambutt R."/>
            <person name="Purnelle B."/>
            <person name="Goffeau A."/>
            <person name="Cadieu E."/>
            <person name="Dreano S."/>
            <person name="Gloux S."/>
            <person name="Lelaure V."/>
            <person name="Mottier S."/>
            <person name="Galibert F."/>
            <person name="Aves S.J."/>
            <person name="Xiang Z."/>
            <person name="Hunt C."/>
            <person name="Moore K."/>
            <person name="Hurst S.M."/>
            <person name="Lucas M."/>
            <person name="Rochet M."/>
            <person name="Gaillardin C."/>
            <person name="Tallada V.A."/>
            <person name="Garzon A."/>
            <person name="Thode G."/>
            <person name="Daga R.R."/>
            <person name="Cruzado L."/>
            <person name="Jimenez J."/>
            <person name="Sanchez M."/>
            <person name="del Rey F."/>
            <person name="Benito J."/>
            <person name="Dominguez A."/>
            <person name="Revuelta J.L."/>
            <person name="Moreno S."/>
            <person name="Armstrong J."/>
            <person name="Forsburg S.L."/>
            <person name="Cerutti L."/>
            <person name="Lowe T."/>
            <person name="McCombie W.R."/>
            <person name="Paulsen I."/>
            <person name="Potashkin J."/>
            <person name="Shpakovski G.V."/>
            <person name="Ussery D."/>
            <person name="Barrell B.G."/>
            <person name="Nurse P."/>
        </authorList>
    </citation>
    <scope>NUCLEOTIDE SEQUENCE [LARGE SCALE GENOMIC DNA]</scope>
    <source>
        <strain>972 / ATCC 24843</strain>
    </source>
</reference>
<reference key="3">
    <citation type="journal article" date="1991" name="Mol. Cell. Biol.">
        <title>A functional 125-kDa core polypeptide of fission yeast DNA topoisomerase II.</title>
        <authorList>
            <person name="Shiozaki K."/>
            <person name="Yanagida M."/>
        </authorList>
    </citation>
    <scope>DOMAINS</scope>
</reference>
<reference key="4">
    <citation type="journal article" date="1992" name="J. Cell Biol.">
        <title>Functional dissection of the phosphorylated termini of fission yeast DNA topoisomerase II.</title>
        <authorList>
            <person name="Shiozaki K."/>
            <person name="Yanagida M."/>
        </authorList>
    </citation>
    <scope>DOMAINS</scope>
    <scope>PHOSPHORYLATION</scope>
</reference>
<reference key="5">
    <citation type="journal article" date="2008" name="J. Proteome Res.">
        <title>Phosphoproteome analysis of fission yeast.</title>
        <authorList>
            <person name="Wilson-Grady J.T."/>
            <person name="Villen J."/>
            <person name="Gygi S.P."/>
        </authorList>
    </citation>
    <scope>PHOSPHORYLATION [LARGE SCALE ANALYSIS] AT SER-1310; SER-1345 AND SER-1433</scope>
    <scope>IDENTIFICATION BY MASS SPECTROMETRY</scope>
</reference>
<gene>
    <name type="primary">top2</name>
    <name type="ORF">SPBC1A4.03c</name>
</gene>
<dbReference type="EC" id="5.6.2.2" evidence="3"/>
<dbReference type="EMBL" id="X04326">
    <property type="protein sequence ID" value="CAA27857.1"/>
    <property type="status" value="ALT_INIT"/>
    <property type="molecule type" value="Genomic_DNA"/>
</dbReference>
<dbReference type="EMBL" id="CU329671">
    <property type="protein sequence ID" value="CAA20107.1"/>
    <property type="molecule type" value="Genomic_DNA"/>
</dbReference>
<dbReference type="PIR" id="T39851">
    <property type="entry name" value="ISZPT2"/>
</dbReference>
<dbReference type="RefSeq" id="NP_595805.1">
    <property type="nucleotide sequence ID" value="NM_001021708.2"/>
</dbReference>
<dbReference type="SMR" id="P08096"/>
<dbReference type="BioGRID" id="277068">
    <property type="interactions" value="83"/>
</dbReference>
<dbReference type="FunCoup" id="P08096">
    <property type="interactions" value="935"/>
</dbReference>
<dbReference type="STRING" id="284812.P08096"/>
<dbReference type="iPTMnet" id="P08096"/>
<dbReference type="PaxDb" id="4896-SPBC1A4.03c.1"/>
<dbReference type="EnsemblFungi" id="SPBC1A4.03c.1">
    <property type="protein sequence ID" value="SPBC1A4.03c.1:pep"/>
    <property type="gene ID" value="SPBC1A4.03c"/>
</dbReference>
<dbReference type="GeneID" id="2540541"/>
<dbReference type="KEGG" id="spo:2540541"/>
<dbReference type="PomBase" id="SPBC1A4.03c">
    <property type="gene designation" value="top2"/>
</dbReference>
<dbReference type="VEuPathDB" id="FungiDB:SPBC1A4.03c"/>
<dbReference type="eggNOG" id="KOG0355">
    <property type="taxonomic scope" value="Eukaryota"/>
</dbReference>
<dbReference type="HOGENOM" id="CLU_001935_1_1_1"/>
<dbReference type="InParanoid" id="P08096"/>
<dbReference type="OMA" id="DVKPHMI"/>
<dbReference type="PhylomeDB" id="P08096"/>
<dbReference type="Reactome" id="R-SPO-4615885">
    <property type="pathway name" value="SUMOylation of DNA replication proteins"/>
</dbReference>
<dbReference type="PRO" id="PR:P08096"/>
<dbReference type="Proteomes" id="UP000002485">
    <property type="component" value="Chromosome II"/>
</dbReference>
<dbReference type="GO" id="GO:0000785">
    <property type="term" value="C:chromatin"/>
    <property type="evidence" value="ECO:0000314"/>
    <property type="project" value="PomBase"/>
</dbReference>
<dbReference type="GO" id="GO:0034506">
    <property type="term" value="C:chromosome, centromeric core domain"/>
    <property type="evidence" value="ECO:0000314"/>
    <property type="project" value="PomBase"/>
</dbReference>
<dbReference type="GO" id="GO:0000791">
    <property type="term" value="C:euchromatin"/>
    <property type="evidence" value="ECO:0000314"/>
    <property type="project" value="PomBase"/>
</dbReference>
<dbReference type="GO" id="GO:0000228">
    <property type="term" value="C:nuclear chromosome"/>
    <property type="evidence" value="ECO:0000303"/>
    <property type="project" value="PomBase"/>
</dbReference>
<dbReference type="GO" id="GO:0005634">
    <property type="term" value="C:nucleus"/>
    <property type="evidence" value="ECO:0000314"/>
    <property type="project" value="PomBase"/>
</dbReference>
<dbReference type="GO" id="GO:0005524">
    <property type="term" value="F:ATP binding"/>
    <property type="evidence" value="ECO:0000305"/>
    <property type="project" value="PomBase"/>
</dbReference>
<dbReference type="GO" id="GO:0016887">
    <property type="term" value="F:ATP hydrolysis activity"/>
    <property type="evidence" value="ECO:0000305"/>
    <property type="project" value="PomBase"/>
</dbReference>
<dbReference type="GO" id="GO:0003677">
    <property type="term" value="F:DNA binding"/>
    <property type="evidence" value="ECO:0000255"/>
    <property type="project" value="PomBase"/>
</dbReference>
<dbReference type="GO" id="GO:0003918">
    <property type="term" value="F:DNA topoisomerase type II (double strand cut, ATP-hydrolyzing) activity"/>
    <property type="evidence" value="ECO:0000314"/>
    <property type="project" value="PomBase"/>
</dbReference>
<dbReference type="GO" id="GO:0046872">
    <property type="term" value="F:metal ion binding"/>
    <property type="evidence" value="ECO:0007669"/>
    <property type="project" value="UniProtKB-KW"/>
</dbReference>
<dbReference type="GO" id="GO:0006325">
    <property type="term" value="P:chromatin organization"/>
    <property type="evidence" value="ECO:0000316"/>
    <property type="project" value="PomBase"/>
</dbReference>
<dbReference type="GO" id="GO:0006265">
    <property type="term" value="P:DNA topological change"/>
    <property type="evidence" value="ECO:0000315"/>
    <property type="project" value="PomBase"/>
</dbReference>
<dbReference type="GO" id="GO:0007076">
    <property type="term" value="P:mitotic chromosome condensation"/>
    <property type="evidence" value="ECO:0000315"/>
    <property type="project" value="PomBase"/>
</dbReference>
<dbReference type="GO" id="GO:0000712">
    <property type="term" value="P:resolution of meiotic recombination intermediates"/>
    <property type="evidence" value="ECO:0000316"/>
    <property type="project" value="PomBase"/>
</dbReference>
<dbReference type="GO" id="GO:0000819">
    <property type="term" value="P:sister chromatid segregation"/>
    <property type="evidence" value="ECO:0000318"/>
    <property type="project" value="GO_Central"/>
</dbReference>
<dbReference type="CDD" id="cd16930">
    <property type="entry name" value="HATPase_TopII-like"/>
    <property type="match status" value="1"/>
</dbReference>
<dbReference type="CDD" id="cd00187">
    <property type="entry name" value="TOP4c"/>
    <property type="match status" value="1"/>
</dbReference>
<dbReference type="CDD" id="cd03481">
    <property type="entry name" value="TopoIIA_Trans_ScTopoIIA"/>
    <property type="match status" value="1"/>
</dbReference>
<dbReference type="CDD" id="cd03365">
    <property type="entry name" value="TOPRIM_TopoIIA"/>
    <property type="match status" value="1"/>
</dbReference>
<dbReference type="FunFam" id="3.30.1360.40:FF:000003">
    <property type="entry name" value="DNA topoisomerase 2"/>
    <property type="match status" value="1"/>
</dbReference>
<dbReference type="FunFam" id="3.30.1490.30:FF:000001">
    <property type="entry name" value="DNA topoisomerase 2"/>
    <property type="match status" value="1"/>
</dbReference>
<dbReference type="FunFam" id="3.30.230.10:FF:000008">
    <property type="entry name" value="DNA topoisomerase 2"/>
    <property type="match status" value="1"/>
</dbReference>
<dbReference type="FunFam" id="3.30.565.10:FF:000004">
    <property type="entry name" value="DNA topoisomerase 2"/>
    <property type="match status" value="1"/>
</dbReference>
<dbReference type="FunFam" id="3.40.50.670:FF:000001">
    <property type="entry name" value="DNA topoisomerase 2"/>
    <property type="match status" value="2"/>
</dbReference>
<dbReference type="FunFam" id="3.90.199.10:FF:000002">
    <property type="entry name" value="DNA topoisomerase 2"/>
    <property type="match status" value="1"/>
</dbReference>
<dbReference type="Gene3D" id="3.30.1360.40">
    <property type="match status" value="1"/>
</dbReference>
<dbReference type="Gene3D" id="3.30.1490.30">
    <property type="match status" value="1"/>
</dbReference>
<dbReference type="Gene3D" id="3.30.230.10">
    <property type="match status" value="1"/>
</dbReference>
<dbReference type="Gene3D" id="3.40.50.670">
    <property type="match status" value="1"/>
</dbReference>
<dbReference type="Gene3D" id="3.30.565.10">
    <property type="entry name" value="Histidine kinase-like ATPase, C-terminal domain"/>
    <property type="match status" value="1"/>
</dbReference>
<dbReference type="Gene3D" id="3.90.199.10">
    <property type="entry name" value="Topoisomerase II, domain 5"/>
    <property type="match status" value="1"/>
</dbReference>
<dbReference type="Gene3D" id="1.10.268.10">
    <property type="entry name" value="Topoisomerase, domain 3"/>
    <property type="match status" value="1"/>
</dbReference>
<dbReference type="InterPro" id="IPR050634">
    <property type="entry name" value="DNA_Topoisomerase_II"/>
</dbReference>
<dbReference type="InterPro" id="IPR036890">
    <property type="entry name" value="HATPase_C_sf"/>
</dbReference>
<dbReference type="InterPro" id="IPR020568">
    <property type="entry name" value="Ribosomal_Su5_D2-typ_SF"/>
</dbReference>
<dbReference type="InterPro" id="IPR014721">
    <property type="entry name" value="Ribsml_uS5_D2-typ_fold_subgr"/>
</dbReference>
<dbReference type="InterPro" id="IPR001241">
    <property type="entry name" value="Topo_IIA"/>
</dbReference>
<dbReference type="InterPro" id="IPR013760">
    <property type="entry name" value="Topo_IIA-like_dom_sf"/>
</dbReference>
<dbReference type="InterPro" id="IPR013758">
    <property type="entry name" value="Topo_IIA_A/C_ab"/>
</dbReference>
<dbReference type="InterPro" id="IPR013757">
    <property type="entry name" value="Topo_IIA_A_a_sf"/>
</dbReference>
<dbReference type="InterPro" id="IPR013759">
    <property type="entry name" value="Topo_IIA_B_C"/>
</dbReference>
<dbReference type="InterPro" id="IPR013506">
    <property type="entry name" value="Topo_IIA_bsu_dom2"/>
</dbReference>
<dbReference type="InterPro" id="IPR002205">
    <property type="entry name" value="Topo_IIA_dom_A"/>
</dbReference>
<dbReference type="InterPro" id="IPR001154">
    <property type="entry name" value="TopoII_euk"/>
</dbReference>
<dbReference type="InterPro" id="IPR018522">
    <property type="entry name" value="TopoIIA_CS"/>
</dbReference>
<dbReference type="InterPro" id="IPR031660">
    <property type="entry name" value="TOPRIM_C"/>
</dbReference>
<dbReference type="InterPro" id="IPR006171">
    <property type="entry name" value="TOPRIM_dom"/>
</dbReference>
<dbReference type="InterPro" id="IPR034157">
    <property type="entry name" value="TOPRIM_TopoII"/>
</dbReference>
<dbReference type="PANTHER" id="PTHR10169:SF38">
    <property type="entry name" value="DNA TOPOISOMERASE 2"/>
    <property type="match status" value="1"/>
</dbReference>
<dbReference type="PANTHER" id="PTHR10169">
    <property type="entry name" value="DNA TOPOISOMERASE/GYRASE"/>
    <property type="match status" value="1"/>
</dbReference>
<dbReference type="Pfam" id="PF00204">
    <property type="entry name" value="DNA_gyraseB"/>
    <property type="match status" value="1"/>
</dbReference>
<dbReference type="Pfam" id="PF00521">
    <property type="entry name" value="DNA_topoisoIV"/>
    <property type="match status" value="1"/>
</dbReference>
<dbReference type="Pfam" id="PF02518">
    <property type="entry name" value="HATPase_c"/>
    <property type="match status" value="1"/>
</dbReference>
<dbReference type="Pfam" id="PF01751">
    <property type="entry name" value="Toprim"/>
    <property type="match status" value="1"/>
</dbReference>
<dbReference type="Pfam" id="PF16898">
    <property type="entry name" value="TOPRIM_C"/>
    <property type="match status" value="1"/>
</dbReference>
<dbReference type="PRINTS" id="PR01158">
    <property type="entry name" value="TOPISMRASEII"/>
</dbReference>
<dbReference type="PRINTS" id="PR00418">
    <property type="entry name" value="TPI2FAMILY"/>
</dbReference>
<dbReference type="SMART" id="SM00387">
    <property type="entry name" value="HATPase_c"/>
    <property type="match status" value="1"/>
</dbReference>
<dbReference type="SMART" id="SM00433">
    <property type="entry name" value="TOP2c"/>
    <property type="match status" value="1"/>
</dbReference>
<dbReference type="SMART" id="SM00434">
    <property type="entry name" value="TOP4c"/>
    <property type="match status" value="1"/>
</dbReference>
<dbReference type="SUPFAM" id="SSF55874">
    <property type="entry name" value="ATPase domain of HSP90 chaperone/DNA topoisomerase II/histidine kinase"/>
    <property type="match status" value="1"/>
</dbReference>
<dbReference type="SUPFAM" id="SSF54211">
    <property type="entry name" value="Ribosomal protein S5 domain 2-like"/>
    <property type="match status" value="1"/>
</dbReference>
<dbReference type="SUPFAM" id="SSF56719">
    <property type="entry name" value="Type II DNA topoisomerase"/>
    <property type="match status" value="1"/>
</dbReference>
<dbReference type="PROSITE" id="PS52040">
    <property type="entry name" value="TOPO_IIA"/>
    <property type="match status" value="1"/>
</dbReference>
<dbReference type="PROSITE" id="PS00177">
    <property type="entry name" value="TOPOISOMERASE_II"/>
    <property type="match status" value="1"/>
</dbReference>
<dbReference type="PROSITE" id="PS50880">
    <property type="entry name" value="TOPRIM"/>
    <property type="match status" value="1"/>
</dbReference>
<keyword id="KW-0067">ATP-binding</keyword>
<keyword id="KW-0238">DNA-binding</keyword>
<keyword id="KW-0413">Isomerase</keyword>
<keyword id="KW-0460">Magnesium</keyword>
<keyword id="KW-0479">Metal-binding</keyword>
<keyword id="KW-0547">Nucleotide-binding</keyword>
<keyword id="KW-0539">Nucleus</keyword>
<keyword id="KW-0597">Phosphoprotein</keyword>
<keyword id="KW-1185">Reference proteome</keyword>
<keyword id="KW-0799">Topoisomerase</keyword>
<accession>P08096</accession>
<accession>O74336</accession>
<comment type="function">
    <text>Control of topological states of DNA by transient breakage and subsequent rejoining of DNA strands. Topoisomerase II makes double-strand breaks.</text>
</comment>
<comment type="catalytic activity">
    <reaction evidence="3">
        <text>ATP-dependent breakage, passage and rejoining of double-stranded DNA.</text>
        <dbReference type="EC" id="5.6.2.2"/>
    </reaction>
</comment>
<comment type="cofactor">
    <cofactor evidence="3">
        <name>Mg(2+)</name>
        <dbReference type="ChEBI" id="CHEBI:18420"/>
    </cofactor>
    <cofactor evidence="3">
        <name>Mn(2+)</name>
        <dbReference type="ChEBI" id="CHEBI:29035"/>
    </cofactor>
    <cofactor evidence="3">
        <name>Ca(2+)</name>
        <dbReference type="ChEBI" id="CHEBI:29108"/>
    </cofactor>
    <text evidence="3">Binds two Mg(2+) per subunit. The magnesium ions form salt bridges with both the protein and the DNA. Can also accept other divalent metal cations, such as Mn(2+) or Ca(2+).</text>
</comment>
<comment type="subunit">
    <text>Homodimer.</text>
</comment>
<comment type="subcellular location">
    <subcellularLocation>
        <location>Nucleus</location>
    </subcellularLocation>
</comment>
<comment type="PTM">
    <text evidence="6 7">Phosphorylated at multiple sites at both extremities of the protein.</text>
</comment>
<comment type="miscellaneous">
    <text>Eukaryotic topoisomerase I and II can relax both negative and positive supercoils, whereas prokaryotic enzymes relax only negative supercoils.</text>
</comment>
<comment type="similarity">
    <text evidence="8">Belongs to the type II topoisomerase family.</text>
</comment>
<comment type="sequence caution" evidence="8">
    <conflict type="erroneous initiation">
        <sequence resource="EMBL-CDS" id="CAA27857"/>
    </conflict>
</comment>
<protein>
    <recommendedName>
        <fullName>DNA topoisomerase 2</fullName>
        <ecNumber evidence="3">5.6.2.2</ecNumber>
    </recommendedName>
    <alternativeName>
        <fullName>DNA topoisomerase II</fullName>
    </alternativeName>
</protein>
<evidence type="ECO:0000250" key="1"/>
<evidence type="ECO:0000250" key="2">
    <source>
        <dbReference type="UniProtKB" id="P06786"/>
    </source>
</evidence>
<evidence type="ECO:0000255" key="3">
    <source>
        <dbReference type="PROSITE-ProRule" id="PRU00995"/>
    </source>
</evidence>
<evidence type="ECO:0000255" key="4">
    <source>
        <dbReference type="PROSITE-ProRule" id="PRU01384"/>
    </source>
</evidence>
<evidence type="ECO:0000256" key="5">
    <source>
        <dbReference type="SAM" id="MobiDB-lite"/>
    </source>
</evidence>
<evidence type="ECO:0000269" key="6">
    <source>
    </source>
</evidence>
<evidence type="ECO:0000269" key="7">
    <source>
    </source>
</evidence>
<evidence type="ECO:0000305" key="8"/>